<sequence>MLNNILQFLKERELYSQANFETELDNHLKEKKNNFYVGFDPTANSLHIGNYVLIHIAKLLKDMGHTPHIVLGSATALIGDPTGRIELRKILEEKEIVKNTKTIKKQIKQFLGDVIIHENKVWLEKLNYIEVIRELGAFFSVNKMLSTDAFSARWEKGLTLMELNYMILQAYDFYYLHKNHNVTLQIGGSDQWANILAGANLIKRKNNASVFGLTANLLVKANGEKMGKTSSGALWLDENKTSVFDFYQYWINLDDQSLKKTFLMLTMLDKKVIDELCNLKGPKIKQTKQMLAFLITELIHGTKKAKEAQQRSELIFSNQPDLDIKLVKTSTNLIDYLVETKFIKSKSEARRLISQKGLTINNKHVLDLNQIIEWKEELQIIRKGKKSFLTIKTVNS</sequence>
<feature type="chain" id="PRO_0000055657" description="Tyrosine--tRNA ligase">
    <location>
        <begin position="1"/>
        <end position="396"/>
    </location>
</feature>
<feature type="domain" description="S4 RNA-binding" evidence="1">
    <location>
        <begin position="331"/>
        <end position="394"/>
    </location>
</feature>
<feature type="short sequence motif" description="'HIGH' region">
    <location>
        <begin position="41"/>
        <end position="50"/>
    </location>
</feature>
<feature type="short sequence motif" description="'KMSKS' region">
    <location>
        <begin position="225"/>
        <end position="229"/>
    </location>
</feature>
<feature type="binding site" evidence="1">
    <location>
        <position position="36"/>
    </location>
    <ligand>
        <name>L-tyrosine</name>
        <dbReference type="ChEBI" id="CHEBI:58315"/>
    </ligand>
</feature>
<feature type="binding site" evidence="1">
    <location>
        <position position="165"/>
    </location>
    <ligand>
        <name>L-tyrosine</name>
        <dbReference type="ChEBI" id="CHEBI:58315"/>
    </ligand>
</feature>
<feature type="binding site" evidence="1">
    <location>
        <position position="169"/>
    </location>
    <ligand>
        <name>L-tyrosine</name>
        <dbReference type="ChEBI" id="CHEBI:58315"/>
    </ligand>
</feature>
<feature type="binding site" evidence="1">
    <location>
        <position position="228"/>
    </location>
    <ligand>
        <name>ATP</name>
        <dbReference type="ChEBI" id="CHEBI:30616"/>
    </ligand>
</feature>
<feature type="sequence conflict" description="In Ref. 2; AAA03403." evidence="3" ref="2">
    <original>Q</original>
    <variation>L</variation>
    <location>
        <position position="191"/>
    </location>
</feature>
<organism>
    <name type="scientific">Mycoplasma genitalium (strain ATCC 33530 / DSM 19775 / NCTC 10195 / G37)</name>
    <name type="common">Mycoplasmoides genitalium</name>
    <dbReference type="NCBI Taxonomy" id="243273"/>
    <lineage>
        <taxon>Bacteria</taxon>
        <taxon>Bacillati</taxon>
        <taxon>Mycoplasmatota</taxon>
        <taxon>Mycoplasmoidales</taxon>
        <taxon>Mycoplasmoidaceae</taxon>
        <taxon>Mycoplasmoides</taxon>
    </lineage>
</organism>
<accession>P47693</accession>
<accession>Q49355</accession>
<gene>
    <name evidence="1" type="primary">tyrS</name>
    <name type="ordered locus">MG455</name>
</gene>
<proteinExistence type="inferred from homology"/>
<evidence type="ECO:0000255" key="1">
    <source>
        <dbReference type="HAMAP-Rule" id="MF_02006"/>
    </source>
</evidence>
<evidence type="ECO:0000269" key="2">
    <source>
    </source>
</evidence>
<evidence type="ECO:0000305" key="3"/>
<name>SYY_MYCGE</name>
<comment type="function">
    <text evidence="1">Catalyzes the attachment of tyrosine to tRNA(Tyr) in a two-step reaction: tyrosine is first activated by ATP to form Tyr-AMP and then transferred to the acceptor end of tRNA(Tyr).</text>
</comment>
<comment type="catalytic activity">
    <reaction evidence="1">
        <text>tRNA(Tyr) + L-tyrosine + ATP = L-tyrosyl-tRNA(Tyr) + AMP + diphosphate + H(+)</text>
        <dbReference type="Rhea" id="RHEA:10220"/>
        <dbReference type="Rhea" id="RHEA-COMP:9706"/>
        <dbReference type="Rhea" id="RHEA-COMP:9707"/>
        <dbReference type="ChEBI" id="CHEBI:15378"/>
        <dbReference type="ChEBI" id="CHEBI:30616"/>
        <dbReference type="ChEBI" id="CHEBI:33019"/>
        <dbReference type="ChEBI" id="CHEBI:58315"/>
        <dbReference type="ChEBI" id="CHEBI:78442"/>
        <dbReference type="ChEBI" id="CHEBI:78536"/>
        <dbReference type="ChEBI" id="CHEBI:456215"/>
        <dbReference type="EC" id="6.1.1.1"/>
    </reaction>
</comment>
<comment type="subunit">
    <text evidence="1">Homodimer.</text>
</comment>
<comment type="subcellular location">
    <subcellularLocation>
        <location evidence="1">Cytoplasm</location>
    </subcellularLocation>
</comment>
<comment type="disruption phenotype">
    <text evidence="2">Probably essential, it was not disrupted in a global transposon mutagenesis study.</text>
</comment>
<comment type="similarity">
    <text evidence="1">Belongs to the class-I aminoacyl-tRNA synthetase family. TyrS type 1 subfamily.</text>
</comment>
<keyword id="KW-0030">Aminoacyl-tRNA synthetase</keyword>
<keyword id="KW-0067">ATP-binding</keyword>
<keyword id="KW-0963">Cytoplasm</keyword>
<keyword id="KW-0436">Ligase</keyword>
<keyword id="KW-0547">Nucleotide-binding</keyword>
<keyword id="KW-0648">Protein biosynthesis</keyword>
<keyword id="KW-1185">Reference proteome</keyword>
<keyword id="KW-0694">RNA-binding</keyword>
<reference key="1">
    <citation type="journal article" date="1995" name="Science">
        <title>The minimal gene complement of Mycoplasma genitalium.</title>
        <authorList>
            <person name="Fraser C.M."/>
            <person name="Gocayne J.D."/>
            <person name="White O."/>
            <person name="Adams M.D."/>
            <person name="Clayton R.A."/>
            <person name="Fleischmann R.D."/>
            <person name="Bult C.J."/>
            <person name="Kerlavage A.R."/>
            <person name="Sutton G.G."/>
            <person name="Kelley J.M."/>
            <person name="Fritchman J.L."/>
            <person name="Weidman J.F."/>
            <person name="Small K.V."/>
            <person name="Sandusky M."/>
            <person name="Fuhrmann J.L."/>
            <person name="Nguyen D.T."/>
            <person name="Utterback T.R."/>
            <person name="Saudek D.M."/>
            <person name="Phillips C.A."/>
            <person name="Merrick J.M."/>
            <person name="Tomb J.-F."/>
            <person name="Dougherty B.A."/>
            <person name="Bott K.F."/>
            <person name="Hu P.-C."/>
            <person name="Lucier T.S."/>
            <person name="Peterson S.N."/>
            <person name="Smith H.O."/>
            <person name="Hutchison C.A. III"/>
            <person name="Venter J.C."/>
        </authorList>
    </citation>
    <scope>NUCLEOTIDE SEQUENCE [LARGE SCALE GENOMIC DNA]</scope>
    <source>
        <strain>ATCC 33530 / DSM 19775 / NCTC 10195 / G37</strain>
    </source>
</reference>
<reference key="2">
    <citation type="journal article" date="1993" name="J. Bacteriol.">
        <title>A survey of the Mycoplasma genitalium genome by using random sequencing.</title>
        <authorList>
            <person name="Peterson S.N."/>
            <person name="Hu P.-C."/>
            <person name="Bott K.F."/>
            <person name="Hutchison C.A. III"/>
        </authorList>
    </citation>
    <scope>NUCLEOTIDE SEQUENCE [GENOMIC DNA] OF 111-191</scope>
    <source>
        <strain>ATCC 33530 / DSM 19775 / NCTC 10195 / G37</strain>
    </source>
</reference>
<reference key="3">
    <citation type="journal article" date="2006" name="Proc. Natl. Acad. Sci. U.S.A.">
        <title>Essential genes of a minimal bacterium.</title>
        <authorList>
            <person name="Glass J.I."/>
            <person name="Assad-Garcia N."/>
            <person name="Alperovich N."/>
            <person name="Yooseph S."/>
            <person name="Lewis M.R."/>
            <person name="Maruf M."/>
            <person name="Hutchison C.A. III"/>
            <person name="Smith H.O."/>
            <person name="Venter J.C."/>
        </authorList>
    </citation>
    <scope>SEQUENCE REVISION</scope>
    <scope>DISRUPTION PHENOTYPE</scope>
    <source>
        <strain>ATCC 33530 / DSM 19775 / NCTC 10195 / G37</strain>
    </source>
</reference>
<dbReference type="EC" id="6.1.1.1" evidence="1"/>
<dbReference type="EMBL" id="L43967">
    <property type="protein sequence ID" value="AAC72475.2"/>
    <property type="molecule type" value="Genomic_DNA"/>
</dbReference>
<dbReference type="EMBL" id="U02247">
    <property type="protein sequence ID" value="AAA03403.1"/>
    <property type="molecule type" value="Genomic_DNA"/>
</dbReference>
<dbReference type="PIR" id="C64250">
    <property type="entry name" value="C64250"/>
</dbReference>
<dbReference type="RefSeq" id="WP_010869488.1">
    <property type="nucleotide sequence ID" value="NC_000908.2"/>
</dbReference>
<dbReference type="SMR" id="P47693"/>
<dbReference type="FunCoup" id="P47693">
    <property type="interactions" value="185"/>
</dbReference>
<dbReference type="STRING" id="243273.MG_455"/>
<dbReference type="GeneID" id="88282635"/>
<dbReference type="KEGG" id="mge:MG_455"/>
<dbReference type="eggNOG" id="COG0162">
    <property type="taxonomic scope" value="Bacteria"/>
</dbReference>
<dbReference type="HOGENOM" id="CLU_024003_0_3_14"/>
<dbReference type="InParanoid" id="P47693"/>
<dbReference type="OrthoDB" id="9804243at2"/>
<dbReference type="BioCyc" id="MGEN243273:G1GJ2-548-MONOMER"/>
<dbReference type="Proteomes" id="UP000000807">
    <property type="component" value="Chromosome"/>
</dbReference>
<dbReference type="GO" id="GO:0005829">
    <property type="term" value="C:cytosol"/>
    <property type="evidence" value="ECO:0000318"/>
    <property type="project" value="GO_Central"/>
</dbReference>
<dbReference type="GO" id="GO:0005524">
    <property type="term" value="F:ATP binding"/>
    <property type="evidence" value="ECO:0007669"/>
    <property type="project" value="UniProtKB-UniRule"/>
</dbReference>
<dbReference type="GO" id="GO:0003723">
    <property type="term" value="F:RNA binding"/>
    <property type="evidence" value="ECO:0007669"/>
    <property type="project" value="UniProtKB-KW"/>
</dbReference>
<dbReference type="GO" id="GO:0004831">
    <property type="term" value="F:tyrosine-tRNA ligase activity"/>
    <property type="evidence" value="ECO:0000318"/>
    <property type="project" value="GO_Central"/>
</dbReference>
<dbReference type="GO" id="GO:0043039">
    <property type="term" value="P:tRNA aminoacylation"/>
    <property type="evidence" value="ECO:0000318"/>
    <property type="project" value="GO_Central"/>
</dbReference>
<dbReference type="GO" id="GO:0006437">
    <property type="term" value="P:tyrosyl-tRNA aminoacylation"/>
    <property type="evidence" value="ECO:0007669"/>
    <property type="project" value="UniProtKB-UniRule"/>
</dbReference>
<dbReference type="CDD" id="cd00165">
    <property type="entry name" value="S4"/>
    <property type="match status" value="1"/>
</dbReference>
<dbReference type="CDD" id="cd00805">
    <property type="entry name" value="TyrRS_core"/>
    <property type="match status" value="1"/>
</dbReference>
<dbReference type="FunFam" id="1.10.240.10:FF:000001">
    <property type="entry name" value="Tyrosine--tRNA ligase"/>
    <property type="match status" value="1"/>
</dbReference>
<dbReference type="Gene3D" id="3.40.50.620">
    <property type="entry name" value="HUPs"/>
    <property type="match status" value="1"/>
</dbReference>
<dbReference type="Gene3D" id="3.10.290.10">
    <property type="entry name" value="RNA-binding S4 domain"/>
    <property type="match status" value="1"/>
</dbReference>
<dbReference type="Gene3D" id="1.10.240.10">
    <property type="entry name" value="Tyrosyl-Transfer RNA Synthetase"/>
    <property type="match status" value="1"/>
</dbReference>
<dbReference type="HAMAP" id="MF_02006">
    <property type="entry name" value="Tyr_tRNA_synth_type1"/>
    <property type="match status" value="1"/>
</dbReference>
<dbReference type="InterPro" id="IPR001412">
    <property type="entry name" value="aa-tRNA-synth_I_CS"/>
</dbReference>
<dbReference type="InterPro" id="IPR002305">
    <property type="entry name" value="aa-tRNA-synth_Ic"/>
</dbReference>
<dbReference type="InterPro" id="IPR014729">
    <property type="entry name" value="Rossmann-like_a/b/a_fold"/>
</dbReference>
<dbReference type="InterPro" id="IPR002942">
    <property type="entry name" value="S4_RNA-bd"/>
</dbReference>
<dbReference type="InterPro" id="IPR036986">
    <property type="entry name" value="S4_RNA-bd_sf"/>
</dbReference>
<dbReference type="InterPro" id="IPR054608">
    <property type="entry name" value="SYY-like_C"/>
</dbReference>
<dbReference type="InterPro" id="IPR002307">
    <property type="entry name" value="Tyr-tRNA-ligase"/>
</dbReference>
<dbReference type="InterPro" id="IPR024088">
    <property type="entry name" value="Tyr-tRNA-ligase_bac-type"/>
</dbReference>
<dbReference type="InterPro" id="IPR024107">
    <property type="entry name" value="Tyr-tRNA-ligase_bac_1"/>
</dbReference>
<dbReference type="NCBIfam" id="TIGR00234">
    <property type="entry name" value="tyrS"/>
    <property type="match status" value="1"/>
</dbReference>
<dbReference type="PANTHER" id="PTHR11766:SF0">
    <property type="entry name" value="TYROSINE--TRNA LIGASE, MITOCHONDRIAL"/>
    <property type="match status" value="1"/>
</dbReference>
<dbReference type="PANTHER" id="PTHR11766">
    <property type="entry name" value="TYROSYL-TRNA SYNTHETASE"/>
    <property type="match status" value="1"/>
</dbReference>
<dbReference type="Pfam" id="PF22421">
    <property type="entry name" value="SYY_C-terminal"/>
    <property type="match status" value="1"/>
</dbReference>
<dbReference type="Pfam" id="PF00579">
    <property type="entry name" value="tRNA-synt_1b"/>
    <property type="match status" value="1"/>
</dbReference>
<dbReference type="PRINTS" id="PR01040">
    <property type="entry name" value="TRNASYNTHTYR"/>
</dbReference>
<dbReference type="SMART" id="SM00363">
    <property type="entry name" value="S4"/>
    <property type="match status" value="1"/>
</dbReference>
<dbReference type="SUPFAM" id="SSF55174">
    <property type="entry name" value="Alpha-L RNA-binding motif"/>
    <property type="match status" value="1"/>
</dbReference>
<dbReference type="SUPFAM" id="SSF52374">
    <property type="entry name" value="Nucleotidylyl transferase"/>
    <property type="match status" value="1"/>
</dbReference>
<dbReference type="PROSITE" id="PS00178">
    <property type="entry name" value="AA_TRNA_LIGASE_I"/>
    <property type="match status" value="1"/>
</dbReference>
<dbReference type="PROSITE" id="PS50889">
    <property type="entry name" value="S4"/>
    <property type="match status" value="1"/>
</dbReference>
<protein>
    <recommendedName>
        <fullName evidence="1">Tyrosine--tRNA ligase</fullName>
        <ecNumber evidence="1">6.1.1.1</ecNumber>
    </recommendedName>
    <alternativeName>
        <fullName evidence="1">Tyrosyl-tRNA synthetase</fullName>
        <shortName evidence="1">TyrRS</shortName>
    </alternativeName>
</protein>